<evidence type="ECO:0000250" key="1"/>
<evidence type="ECO:0000305" key="2"/>
<name>KLED2_ECOLX</name>
<feature type="chain" id="PRO_0000068370" description="Protein KleD">
    <location>
        <begin position="1"/>
        <end position="66"/>
    </location>
</feature>
<feature type="DNA-binding region" description="H-T-H motif" evidence="1">
    <location>
        <begin position="33"/>
        <end position="52"/>
    </location>
</feature>
<keyword id="KW-0238">DNA-binding</keyword>
<keyword id="KW-0614">Plasmid</keyword>
<sequence length="66" mass="7377">MNWQHTPRGGYGYSVCVAGIVTKIAAKRVQIRVAVRSGNEWQQVTKWVEPARLSTREKPVPELDGA</sequence>
<reference key="1">
    <citation type="journal article" date="1988" name="Nucleic Acids Res.">
        <title>Gene regulation on broad host range plasmid RK2: identification of three novel operons whose transcription is repressed by both KorA and KorC.</title>
        <authorList>
            <person name="Thomas C.M."/>
            <person name="Ibbotson J.P."/>
            <person name="Wang N."/>
            <person name="Smith C.A."/>
            <person name="Tipping R."/>
            <person name="Loader N.M."/>
        </authorList>
    </citation>
    <scope>NUCLEOTIDE SEQUENCE [GENOMIC DNA]</scope>
</reference>
<reference key="2">
    <citation type="journal article" date="1993" name="J. Bacteriol.">
        <title>kil-kor regulon of promiscuous plasmid RK2: structure, products, and regulation of two operons that constitute the kilE locus.</title>
        <authorList>
            <person name="Kornacki J.A."/>
            <person name="Chang C.-H."/>
            <person name="Figurski D.H."/>
        </authorList>
    </citation>
    <scope>NUCLEOTIDE SEQUENCE [GENOMIC DNA]</scope>
</reference>
<protein>
    <recommendedName>
        <fullName>Protein KleD</fullName>
    </recommendedName>
    <alternativeName>
        <fullName>KcrB2 protein</fullName>
    </alternativeName>
</protein>
<comment type="sequence caution" evidence="2">
    <conflict type="erroneous initiation">
        <sequence resource="EMBL-CDS" id="AAA92768"/>
    </conflict>
</comment>
<accession>P13967</accession>
<accession>Q52771</accession>
<geneLocation type="plasmid">
    <name>IncP-alpha RK2</name>
</geneLocation>
<gene>
    <name type="primary">kleD</name>
    <name type="synonym">kcrB2</name>
</gene>
<organism>
    <name type="scientific">Escherichia coli</name>
    <dbReference type="NCBI Taxonomy" id="562"/>
    <lineage>
        <taxon>Bacteria</taxon>
        <taxon>Pseudomonadati</taxon>
        <taxon>Pseudomonadota</taxon>
        <taxon>Gammaproteobacteria</taxon>
        <taxon>Enterobacterales</taxon>
        <taxon>Enterobacteriaceae</taxon>
        <taxon>Escherichia</taxon>
    </lineage>
</organism>
<dbReference type="EMBL" id="X07248">
    <property type="protein sequence ID" value="CAA30236.1"/>
    <property type="molecule type" value="Genomic_DNA"/>
</dbReference>
<dbReference type="EMBL" id="L18919">
    <property type="protein sequence ID" value="AAA92769.1"/>
    <property type="molecule type" value="Genomic_DNA"/>
</dbReference>
<dbReference type="EMBL" id="L18919">
    <property type="protein sequence ID" value="AAA92768.1"/>
    <property type="status" value="ALT_INIT"/>
    <property type="molecule type" value="Genomic_DNA"/>
</dbReference>
<dbReference type="PIR" id="E53306">
    <property type="entry name" value="E53306"/>
</dbReference>
<dbReference type="GO" id="GO:0003677">
    <property type="term" value="F:DNA binding"/>
    <property type="evidence" value="ECO:0007669"/>
    <property type="project" value="UniProtKB-KW"/>
</dbReference>
<proteinExistence type="predicted"/>